<proteinExistence type="evidence at protein level"/>
<keyword id="KW-0413">Isomerase</keyword>
<sequence length="310" mass="33739">MKTVKILDSHTGGEPTRLVLEGFPDLGTGDMESRRKILSEQYDHFRRATMLEPRGNDVLVGALLCKPVNPKASAGVIFFNNTGYLGMCGHGTIGLVASLAHLGKIQVGTHLIETPVGDVEATLHEDHSVSVRNVPAYRYKKAVEVDVEKYGKVTGDIAWGGNWFFLINDHGQRVASDNLDQLTEYAWTVRQALTAQGITGKDGQEIDHIELFASDTEADSKNFVLCPGKAYDRSPCGTGTSAKIACLAADGKLEPGKLWKQASIIGSQFIASYEQAGEYVIPTIRGEAYMSAEATLFMDENDPFAWGIQL</sequence>
<protein>
    <recommendedName>
        <fullName evidence="3">4-hydroxyproline 2-epimerase</fullName>
        <shortName>4Hyp 2-epimerase</shortName>
        <shortName evidence="3">4HypE</shortName>
        <ecNumber evidence="2">5.1.1.8</ecNumber>
    </recommendedName>
</protein>
<evidence type="ECO:0000250" key="1">
    <source>
        <dbReference type="UniProtKB" id="Q4KGU2"/>
    </source>
</evidence>
<evidence type="ECO:0000269" key="2">
    <source>
    </source>
</evidence>
<evidence type="ECO:0000303" key="3">
    <source>
    </source>
</evidence>
<evidence type="ECO:0000305" key="4"/>
<evidence type="ECO:0000312" key="5">
    <source>
        <dbReference type="EMBL" id="ABO11753.2"/>
    </source>
</evidence>
<organism>
    <name type="scientific">Acinetobacter baumannii (strain ATCC 17978 / DSM 105126 / CIP 53.77 / LMG 1025 / NCDC KC755 / 5377)</name>
    <dbReference type="NCBI Taxonomy" id="400667"/>
    <lineage>
        <taxon>Bacteria</taxon>
        <taxon>Pseudomonadati</taxon>
        <taxon>Pseudomonadota</taxon>
        <taxon>Gammaproteobacteria</taxon>
        <taxon>Moraxellales</taxon>
        <taxon>Moraxellaceae</taxon>
        <taxon>Acinetobacter</taxon>
        <taxon>Acinetobacter calcoaceticus/baumannii complex</taxon>
    </lineage>
</organism>
<reference key="1">
    <citation type="journal article" date="2007" name="Genes Dev.">
        <title>New insights into Acinetobacter baumannii pathogenesis revealed by high-density pyrosequencing and transposon mutagenesis.</title>
        <authorList>
            <person name="Smith M.G."/>
            <person name="Gianoulis T.A."/>
            <person name="Pukatzki S."/>
            <person name="Mekalanos J.J."/>
            <person name="Ornston L.N."/>
            <person name="Gerstein M."/>
            <person name="Snyder M."/>
        </authorList>
    </citation>
    <scope>NUCLEOTIDE SEQUENCE [LARGE SCALE GENOMIC DNA]</scope>
    <source>
        <strain>ATCC 17978 / DSM 105126 / CIP 53.77 / LMG 1025 / NCDC KC755 / 5377</strain>
    </source>
</reference>
<reference key="2">
    <citation type="journal article" date="2014" name="Elife">
        <title>Prediction and characterization of enzymatic activities guided by sequence similarity and genome neighborhood networks.</title>
        <authorList>
            <person name="Zhao S."/>
            <person name="Sakai A."/>
            <person name="Zhang X."/>
            <person name="Vetting M.W."/>
            <person name="Kumar R."/>
            <person name="Hillerich B."/>
            <person name="San Francisco B."/>
            <person name="Solbiati J."/>
            <person name="Steves A."/>
            <person name="Brown S."/>
            <person name="Akiva E."/>
            <person name="Barber A."/>
            <person name="Seidel R.D."/>
            <person name="Babbitt P.C."/>
            <person name="Almo S.C."/>
            <person name="Gerlt J.A."/>
            <person name="Jacobson M.P."/>
        </authorList>
    </citation>
    <scope>FUNCTION</scope>
    <scope>CATALYTIC ACTIVITY</scope>
</reference>
<name>4HYPE_ACIBT</name>
<accession>A3M4A9</accession>
<comment type="function">
    <text evidence="2">Catalyzes the epimerization of trans-4-hydroxy-L-proline (t4LHyp) to cis-4-hydroxy-D-proline (c4DHyp). Is likely involved in a degradation pathway that converts t4LHyp to alpha-ketoglutarate. Displays no proline racemase activity.</text>
</comment>
<comment type="catalytic activity">
    <reaction evidence="2">
        <text>trans-4-hydroxy-L-proline = cis-4-hydroxy-D-proline</text>
        <dbReference type="Rhea" id="RHEA:21152"/>
        <dbReference type="ChEBI" id="CHEBI:57690"/>
        <dbReference type="ChEBI" id="CHEBI:58375"/>
        <dbReference type="EC" id="5.1.1.8"/>
    </reaction>
</comment>
<comment type="similarity">
    <text evidence="4">Belongs to the proline racemase family.</text>
</comment>
<dbReference type="EC" id="5.1.1.8" evidence="2"/>
<dbReference type="EMBL" id="CP000521">
    <property type="protein sequence ID" value="ABO11753.2"/>
    <property type="molecule type" value="Genomic_DNA"/>
</dbReference>
<dbReference type="RefSeq" id="WP_000859581.1">
    <property type="nucleotide sequence ID" value="NZ_CP053098.1"/>
</dbReference>
<dbReference type="SMR" id="A3M4A9"/>
<dbReference type="KEGG" id="acb:A1S_1325"/>
<dbReference type="HOGENOM" id="CLU_036729_1_0_6"/>
<dbReference type="GO" id="GO:0047580">
    <property type="term" value="F:4-hydroxyproline epimerase activity"/>
    <property type="evidence" value="ECO:0007669"/>
    <property type="project" value="UniProtKB-EC"/>
</dbReference>
<dbReference type="FunFam" id="3.10.310.10:FF:000012">
    <property type="entry name" value="4-hydroxyproline 2-epimerase"/>
    <property type="match status" value="1"/>
</dbReference>
<dbReference type="Gene3D" id="3.10.310.10">
    <property type="entry name" value="Diaminopimelate Epimerase, Chain A, domain 1"/>
    <property type="match status" value="2"/>
</dbReference>
<dbReference type="InterPro" id="IPR008794">
    <property type="entry name" value="Pro_racemase_fam"/>
</dbReference>
<dbReference type="NCBIfam" id="NF010577">
    <property type="entry name" value="PRK13970.1"/>
    <property type="match status" value="1"/>
</dbReference>
<dbReference type="PANTHER" id="PTHR33442">
    <property type="entry name" value="TRANS-3-HYDROXY-L-PROLINE DEHYDRATASE"/>
    <property type="match status" value="1"/>
</dbReference>
<dbReference type="PANTHER" id="PTHR33442:SF1">
    <property type="entry name" value="TRANS-3-HYDROXY-L-PROLINE DEHYDRATASE"/>
    <property type="match status" value="1"/>
</dbReference>
<dbReference type="Pfam" id="PF05544">
    <property type="entry name" value="Pro_racemase"/>
    <property type="match status" value="1"/>
</dbReference>
<dbReference type="PIRSF" id="PIRSF029792">
    <property type="entry name" value="Pro_racemase"/>
    <property type="match status" value="1"/>
</dbReference>
<dbReference type="SFLD" id="SFLDS00028">
    <property type="entry name" value="Proline_Racemase"/>
    <property type="match status" value="1"/>
</dbReference>
<dbReference type="SUPFAM" id="SSF54506">
    <property type="entry name" value="Diaminopimelate epimerase-like"/>
    <property type="match status" value="1"/>
</dbReference>
<gene>
    <name evidence="5" type="ordered locus">A1S_1325</name>
</gene>
<feature type="chain" id="PRO_0000432280" description="4-hydroxyproline 2-epimerase">
    <location>
        <begin position="1"/>
        <end position="310"/>
    </location>
</feature>
<feature type="active site" description="Proton acceptor" evidence="1">
    <location>
        <position position="88"/>
    </location>
</feature>
<feature type="active site" description="Proton donor" evidence="1">
    <location>
        <position position="236"/>
    </location>
</feature>
<feature type="binding site" evidence="1">
    <location>
        <begin position="89"/>
        <end position="90"/>
    </location>
    <ligand>
        <name>substrate</name>
    </ligand>
</feature>
<feature type="binding site" evidence="1">
    <location>
        <position position="208"/>
    </location>
    <ligand>
        <name>substrate</name>
    </ligand>
</feature>
<feature type="binding site" evidence="1">
    <location>
        <position position="232"/>
    </location>
    <ligand>
        <name>substrate</name>
    </ligand>
</feature>
<feature type="binding site" evidence="1">
    <location>
        <begin position="237"/>
        <end position="238"/>
    </location>
    <ligand>
        <name>substrate</name>
    </ligand>
</feature>